<feature type="chain" id="PRO_0000147859" description="Phosphoglucosamine mutase">
    <location>
        <begin position="1"/>
        <end position="451"/>
    </location>
</feature>
<feature type="active site" description="Phosphoserine intermediate" evidence="1">
    <location>
        <position position="102"/>
    </location>
</feature>
<feature type="binding site" description="via phosphate group" evidence="1">
    <location>
        <position position="102"/>
    </location>
    <ligand>
        <name>Mg(2+)</name>
        <dbReference type="ChEBI" id="CHEBI:18420"/>
    </ligand>
</feature>
<feature type="binding site" evidence="1">
    <location>
        <position position="243"/>
    </location>
    <ligand>
        <name>Mg(2+)</name>
        <dbReference type="ChEBI" id="CHEBI:18420"/>
    </ligand>
</feature>
<feature type="binding site" evidence="1">
    <location>
        <position position="245"/>
    </location>
    <ligand>
        <name>Mg(2+)</name>
        <dbReference type="ChEBI" id="CHEBI:18420"/>
    </ligand>
</feature>
<feature type="binding site" evidence="1">
    <location>
        <position position="247"/>
    </location>
    <ligand>
        <name>Mg(2+)</name>
        <dbReference type="ChEBI" id="CHEBI:18420"/>
    </ligand>
</feature>
<feature type="modified residue" description="Phosphoserine" evidence="1">
    <location>
        <position position="102"/>
    </location>
</feature>
<dbReference type="EC" id="5.4.2.10" evidence="1"/>
<dbReference type="EMBL" id="AE014291">
    <property type="protein sequence ID" value="AAN30590.1"/>
    <property type="molecule type" value="Genomic_DNA"/>
</dbReference>
<dbReference type="EMBL" id="CP002997">
    <property type="protein sequence ID" value="AEM19007.1"/>
    <property type="molecule type" value="Genomic_DNA"/>
</dbReference>
<dbReference type="SMR" id="Q8FZ13"/>
<dbReference type="KEGG" id="bms:BR1690"/>
<dbReference type="KEGG" id="bsi:BS1330_I1684"/>
<dbReference type="PATRIC" id="fig|204722.22.peg.163"/>
<dbReference type="HOGENOM" id="CLU_016950_7_0_5"/>
<dbReference type="PhylomeDB" id="Q8FZ13"/>
<dbReference type="Proteomes" id="UP000007104">
    <property type="component" value="Chromosome I"/>
</dbReference>
<dbReference type="GO" id="GO:0005829">
    <property type="term" value="C:cytosol"/>
    <property type="evidence" value="ECO:0007669"/>
    <property type="project" value="TreeGrafter"/>
</dbReference>
<dbReference type="GO" id="GO:0000287">
    <property type="term" value="F:magnesium ion binding"/>
    <property type="evidence" value="ECO:0007669"/>
    <property type="project" value="UniProtKB-UniRule"/>
</dbReference>
<dbReference type="GO" id="GO:0008966">
    <property type="term" value="F:phosphoglucosamine mutase activity"/>
    <property type="evidence" value="ECO:0007669"/>
    <property type="project" value="UniProtKB-UniRule"/>
</dbReference>
<dbReference type="GO" id="GO:0004615">
    <property type="term" value="F:phosphomannomutase activity"/>
    <property type="evidence" value="ECO:0007669"/>
    <property type="project" value="TreeGrafter"/>
</dbReference>
<dbReference type="GO" id="GO:0005975">
    <property type="term" value="P:carbohydrate metabolic process"/>
    <property type="evidence" value="ECO:0007669"/>
    <property type="project" value="InterPro"/>
</dbReference>
<dbReference type="GO" id="GO:0009252">
    <property type="term" value="P:peptidoglycan biosynthetic process"/>
    <property type="evidence" value="ECO:0007669"/>
    <property type="project" value="TreeGrafter"/>
</dbReference>
<dbReference type="GO" id="GO:0006048">
    <property type="term" value="P:UDP-N-acetylglucosamine biosynthetic process"/>
    <property type="evidence" value="ECO:0007669"/>
    <property type="project" value="TreeGrafter"/>
</dbReference>
<dbReference type="CDD" id="cd05802">
    <property type="entry name" value="GlmM"/>
    <property type="match status" value="1"/>
</dbReference>
<dbReference type="FunFam" id="3.30.310.50:FF:000001">
    <property type="entry name" value="Phosphoglucosamine mutase"/>
    <property type="match status" value="1"/>
</dbReference>
<dbReference type="FunFam" id="3.40.120.10:FF:000001">
    <property type="entry name" value="Phosphoglucosamine mutase"/>
    <property type="match status" value="1"/>
</dbReference>
<dbReference type="FunFam" id="3.40.120.10:FF:000003">
    <property type="entry name" value="Phosphoglucosamine mutase"/>
    <property type="match status" value="1"/>
</dbReference>
<dbReference type="Gene3D" id="3.40.120.10">
    <property type="entry name" value="Alpha-D-Glucose-1,6-Bisphosphate, subunit A, domain 3"/>
    <property type="match status" value="3"/>
</dbReference>
<dbReference type="Gene3D" id="3.30.310.50">
    <property type="entry name" value="Alpha-D-phosphohexomutase, C-terminal domain"/>
    <property type="match status" value="1"/>
</dbReference>
<dbReference type="HAMAP" id="MF_01554_B">
    <property type="entry name" value="GlmM_B"/>
    <property type="match status" value="1"/>
</dbReference>
<dbReference type="InterPro" id="IPR005844">
    <property type="entry name" value="A-D-PHexomutase_a/b/a-I"/>
</dbReference>
<dbReference type="InterPro" id="IPR016055">
    <property type="entry name" value="A-D-PHexomutase_a/b/a-I/II/III"/>
</dbReference>
<dbReference type="InterPro" id="IPR005845">
    <property type="entry name" value="A-D-PHexomutase_a/b/a-II"/>
</dbReference>
<dbReference type="InterPro" id="IPR005846">
    <property type="entry name" value="A-D-PHexomutase_a/b/a-III"/>
</dbReference>
<dbReference type="InterPro" id="IPR005843">
    <property type="entry name" value="A-D-PHexomutase_C"/>
</dbReference>
<dbReference type="InterPro" id="IPR036900">
    <property type="entry name" value="A-D-PHexomutase_C_sf"/>
</dbReference>
<dbReference type="InterPro" id="IPR016066">
    <property type="entry name" value="A-D-PHexomutase_CS"/>
</dbReference>
<dbReference type="InterPro" id="IPR005841">
    <property type="entry name" value="Alpha-D-phosphohexomutase_SF"/>
</dbReference>
<dbReference type="InterPro" id="IPR006352">
    <property type="entry name" value="GlmM_bact"/>
</dbReference>
<dbReference type="InterPro" id="IPR050060">
    <property type="entry name" value="Phosphoglucosamine_mutase"/>
</dbReference>
<dbReference type="NCBIfam" id="TIGR01455">
    <property type="entry name" value="glmM"/>
    <property type="match status" value="1"/>
</dbReference>
<dbReference type="NCBIfam" id="NF008139">
    <property type="entry name" value="PRK10887.1"/>
    <property type="match status" value="1"/>
</dbReference>
<dbReference type="PANTHER" id="PTHR42946:SF1">
    <property type="entry name" value="PHOSPHOGLUCOMUTASE (ALPHA-D-GLUCOSE-1,6-BISPHOSPHATE-DEPENDENT)"/>
    <property type="match status" value="1"/>
</dbReference>
<dbReference type="PANTHER" id="PTHR42946">
    <property type="entry name" value="PHOSPHOHEXOSE MUTASE"/>
    <property type="match status" value="1"/>
</dbReference>
<dbReference type="Pfam" id="PF02878">
    <property type="entry name" value="PGM_PMM_I"/>
    <property type="match status" value="1"/>
</dbReference>
<dbReference type="Pfam" id="PF02879">
    <property type="entry name" value="PGM_PMM_II"/>
    <property type="match status" value="1"/>
</dbReference>
<dbReference type="Pfam" id="PF02880">
    <property type="entry name" value="PGM_PMM_III"/>
    <property type="match status" value="1"/>
</dbReference>
<dbReference type="Pfam" id="PF00408">
    <property type="entry name" value="PGM_PMM_IV"/>
    <property type="match status" value="1"/>
</dbReference>
<dbReference type="PRINTS" id="PR00509">
    <property type="entry name" value="PGMPMM"/>
</dbReference>
<dbReference type="SUPFAM" id="SSF55957">
    <property type="entry name" value="Phosphoglucomutase, C-terminal domain"/>
    <property type="match status" value="1"/>
</dbReference>
<dbReference type="SUPFAM" id="SSF53738">
    <property type="entry name" value="Phosphoglucomutase, first 3 domains"/>
    <property type="match status" value="3"/>
</dbReference>
<dbReference type="PROSITE" id="PS00710">
    <property type="entry name" value="PGM_PMM"/>
    <property type="match status" value="1"/>
</dbReference>
<evidence type="ECO:0000255" key="1">
    <source>
        <dbReference type="HAMAP-Rule" id="MF_01554"/>
    </source>
</evidence>
<gene>
    <name evidence="1" type="primary">glmM</name>
    <name type="ordered locus">BR1690</name>
    <name type="ordered locus">BS1330_I1684</name>
</gene>
<proteinExistence type="inferred from homology"/>
<accession>Q8FZ13</accession>
<accession>G0K6V2</accession>
<sequence length="451" mass="48569">MTRKFFGTDGIRGQANSFPMTPEIAMKVGMAVGYIFRRKGQASRVVIGKDTRRSGYMLENALVAGFTAAGMDVFLLGPIPTPAVAMLCRSLRADIGVMISASHNPFYDNGIKLFGPDGFKLSDQIELQIEAMIEGDMTPFLASHGDVGRAKRVDGDIYRYIEFAKRTLPRNISLNGLRVVVDCANGAGYKVAPAALWELGAEVITINNEPNGININEDCGSTHPIGLMKKVHEVRADVGIALDGDADRVLLVDENGTVIDGDQLMAVIAESWAASNRLEGGGIVATVMSNLGLERFLADRNLTLARTKVGDRYVVEHMREHGFNVGGEQSGHIVLSDFATTGDGLISALQILAVAQEQNKPISDVCRKFQPVPQLLKNVRTTGGKPLENKRVKSAIDEAKERLGGQGRLVIRPSGTEPLIRVMAEGDDRGLVEKVVNDIIDVISSESSAAA</sequence>
<reference key="1">
    <citation type="journal article" date="2002" name="Proc. Natl. Acad. Sci. U.S.A.">
        <title>The Brucella suis genome reveals fundamental similarities between animal and plant pathogens and symbionts.</title>
        <authorList>
            <person name="Paulsen I.T."/>
            <person name="Seshadri R."/>
            <person name="Nelson K.E."/>
            <person name="Eisen J.A."/>
            <person name="Heidelberg J.F."/>
            <person name="Read T.D."/>
            <person name="Dodson R.J."/>
            <person name="Umayam L.A."/>
            <person name="Brinkac L.M."/>
            <person name="Beanan M.J."/>
            <person name="Daugherty S.C."/>
            <person name="DeBoy R.T."/>
            <person name="Durkin A.S."/>
            <person name="Kolonay J.F."/>
            <person name="Madupu R."/>
            <person name="Nelson W.C."/>
            <person name="Ayodeji B."/>
            <person name="Kraul M."/>
            <person name="Shetty J."/>
            <person name="Malek J.A."/>
            <person name="Van Aken S.E."/>
            <person name="Riedmuller S."/>
            <person name="Tettelin H."/>
            <person name="Gill S.R."/>
            <person name="White O."/>
            <person name="Salzberg S.L."/>
            <person name="Hoover D.L."/>
            <person name="Lindler L.E."/>
            <person name="Halling S.M."/>
            <person name="Boyle S.M."/>
            <person name="Fraser C.M."/>
        </authorList>
    </citation>
    <scope>NUCLEOTIDE SEQUENCE [LARGE SCALE GENOMIC DNA]</scope>
    <source>
        <strain>1330</strain>
    </source>
</reference>
<reference key="2">
    <citation type="journal article" date="2011" name="J. Bacteriol.">
        <title>Revised genome sequence of Brucella suis 1330.</title>
        <authorList>
            <person name="Tae H."/>
            <person name="Shallom S."/>
            <person name="Settlage R."/>
            <person name="Preston D."/>
            <person name="Adams L.G."/>
            <person name="Garner H.R."/>
        </authorList>
    </citation>
    <scope>NUCLEOTIDE SEQUENCE [LARGE SCALE GENOMIC DNA]</scope>
    <source>
        <strain>1330</strain>
    </source>
</reference>
<comment type="function">
    <text evidence="1">Catalyzes the conversion of glucosamine-6-phosphate to glucosamine-1-phosphate.</text>
</comment>
<comment type="catalytic activity">
    <reaction evidence="1">
        <text>alpha-D-glucosamine 1-phosphate = D-glucosamine 6-phosphate</text>
        <dbReference type="Rhea" id="RHEA:23424"/>
        <dbReference type="ChEBI" id="CHEBI:58516"/>
        <dbReference type="ChEBI" id="CHEBI:58725"/>
        <dbReference type="EC" id="5.4.2.10"/>
    </reaction>
</comment>
<comment type="cofactor">
    <cofactor evidence="1">
        <name>Mg(2+)</name>
        <dbReference type="ChEBI" id="CHEBI:18420"/>
    </cofactor>
    <text evidence="1">Binds 1 Mg(2+) ion per subunit.</text>
</comment>
<comment type="PTM">
    <text evidence="1">Activated by phosphorylation.</text>
</comment>
<comment type="similarity">
    <text evidence="1">Belongs to the phosphohexose mutase family.</text>
</comment>
<organism>
    <name type="scientific">Brucella suis biovar 1 (strain 1330)</name>
    <dbReference type="NCBI Taxonomy" id="204722"/>
    <lineage>
        <taxon>Bacteria</taxon>
        <taxon>Pseudomonadati</taxon>
        <taxon>Pseudomonadota</taxon>
        <taxon>Alphaproteobacteria</taxon>
        <taxon>Hyphomicrobiales</taxon>
        <taxon>Brucellaceae</taxon>
        <taxon>Brucella/Ochrobactrum group</taxon>
        <taxon>Brucella</taxon>
    </lineage>
</organism>
<protein>
    <recommendedName>
        <fullName evidence="1">Phosphoglucosamine mutase</fullName>
        <ecNumber evidence="1">5.4.2.10</ecNumber>
    </recommendedName>
</protein>
<name>GLMM_BRUSU</name>
<keyword id="KW-0413">Isomerase</keyword>
<keyword id="KW-0460">Magnesium</keyword>
<keyword id="KW-0479">Metal-binding</keyword>
<keyword id="KW-0597">Phosphoprotein</keyword>